<protein>
    <recommendedName>
        <fullName>Homeobox-leucine zipper protein ATHB-21</fullName>
    </recommendedName>
    <alternativeName>
        <fullName>HD-ZIP protein ATHB-21</fullName>
    </alternativeName>
    <alternativeName>
        <fullName>Homeodomain transcription factor ATHB-21</fullName>
    </alternativeName>
</protein>
<proteinExistence type="evidence at transcript level"/>
<organism>
    <name type="scientific">Arabidopsis thaliana</name>
    <name type="common">Mouse-ear cress</name>
    <dbReference type="NCBI Taxonomy" id="3702"/>
    <lineage>
        <taxon>Eukaryota</taxon>
        <taxon>Viridiplantae</taxon>
        <taxon>Streptophyta</taxon>
        <taxon>Embryophyta</taxon>
        <taxon>Tracheophyta</taxon>
        <taxon>Spermatophyta</taxon>
        <taxon>Magnoliopsida</taxon>
        <taxon>eudicotyledons</taxon>
        <taxon>Gunneridae</taxon>
        <taxon>Pentapetalae</taxon>
        <taxon>rosids</taxon>
        <taxon>malvids</taxon>
        <taxon>Brassicales</taxon>
        <taxon>Brassicaceae</taxon>
        <taxon>Camelineae</taxon>
        <taxon>Arabidopsis</taxon>
    </lineage>
</organism>
<sequence>MNNQNVDDHNLLLISQLYPNVYTPLVPQQGGEAKPTRRRKRKSKSVVVAEEGENEGNGWFRKRKLSDEQVRMLEISFEDDHKLESERKDRLASELGLDPRQVAVWFQNRRARWKNKRVEDEYTKLKNAYETTVVEKCRLDSEVIHLKEQLYEAEREIQRLAKRVEGTLSNSPISSSVTIEANHTTPFFGDYDIGFDGEADENLLYSPDYIDGLDWMSQFM</sequence>
<accession>Q9ZU70</accession>
<accession>B2GVN1</accession>
<comment type="function">
    <text evidence="1">Probable transcription factor.</text>
</comment>
<comment type="subcellular location">
    <subcellularLocation>
        <location evidence="5">Nucleus</location>
    </subcellularLocation>
</comment>
<comment type="tissue specificity">
    <text evidence="4">Widely expressed.</text>
</comment>
<comment type="induction">
    <text evidence="4">By abscisic acid (ABA) and by salt stress.</text>
</comment>
<comment type="similarity">
    <text evidence="5">Belongs to the HD-ZIP homeobox family. Class I subfamily.</text>
</comment>
<feature type="chain" id="PRO_0000257798" description="Homeobox-leucine zipper protein ATHB-21">
    <location>
        <begin position="1"/>
        <end position="220"/>
    </location>
</feature>
<feature type="DNA-binding region" description="Homeobox" evidence="2">
    <location>
        <begin position="58"/>
        <end position="117"/>
    </location>
</feature>
<feature type="region of interest" description="Disordered" evidence="3">
    <location>
        <begin position="26"/>
        <end position="48"/>
    </location>
</feature>
<feature type="region of interest" description="Leucine-zipper">
    <location>
        <begin position="118"/>
        <end position="146"/>
    </location>
</feature>
<dbReference type="EMBL" id="AC006135">
    <property type="protein sequence ID" value="AAD12212.1"/>
    <property type="molecule type" value="Genomic_DNA"/>
</dbReference>
<dbReference type="EMBL" id="CP002685">
    <property type="protein sequence ID" value="AEC06780.1"/>
    <property type="molecule type" value="Genomic_DNA"/>
</dbReference>
<dbReference type="EMBL" id="BT031362">
    <property type="protein sequence ID" value="ACB88824.1"/>
    <property type="molecule type" value="mRNA"/>
</dbReference>
<dbReference type="PIR" id="F84565">
    <property type="entry name" value="F84565"/>
</dbReference>
<dbReference type="RefSeq" id="NP_179445.1">
    <property type="nucleotide sequence ID" value="NM_127411.2"/>
</dbReference>
<dbReference type="SMR" id="Q9ZU70"/>
<dbReference type="BioGRID" id="1727">
    <property type="interactions" value="6"/>
</dbReference>
<dbReference type="FunCoup" id="Q9ZU70">
    <property type="interactions" value="84"/>
</dbReference>
<dbReference type="STRING" id="3702.Q9ZU70"/>
<dbReference type="iPTMnet" id="Q9ZU70"/>
<dbReference type="PaxDb" id="3702-AT2G18550.1"/>
<dbReference type="ProteomicsDB" id="246533"/>
<dbReference type="EnsemblPlants" id="AT2G18550.1">
    <property type="protein sequence ID" value="AT2G18550.1"/>
    <property type="gene ID" value="AT2G18550"/>
</dbReference>
<dbReference type="GeneID" id="816370"/>
<dbReference type="Gramene" id="AT2G18550.1">
    <property type="protein sequence ID" value="AT2G18550.1"/>
    <property type="gene ID" value="AT2G18550"/>
</dbReference>
<dbReference type="KEGG" id="ath:AT2G18550"/>
<dbReference type="Araport" id="AT2G18550"/>
<dbReference type="TAIR" id="AT2G18550">
    <property type="gene designation" value="HB21"/>
</dbReference>
<dbReference type="eggNOG" id="KOG0483">
    <property type="taxonomic scope" value="Eukaryota"/>
</dbReference>
<dbReference type="HOGENOM" id="CLU_100008_1_0_1"/>
<dbReference type="InParanoid" id="Q9ZU70"/>
<dbReference type="OMA" id="DYDIGFD"/>
<dbReference type="PhylomeDB" id="Q9ZU70"/>
<dbReference type="PRO" id="PR:Q9ZU70"/>
<dbReference type="Proteomes" id="UP000006548">
    <property type="component" value="Chromosome 2"/>
</dbReference>
<dbReference type="ExpressionAtlas" id="Q9ZU70">
    <property type="expression patterns" value="baseline and differential"/>
</dbReference>
<dbReference type="GO" id="GO:0005634">
    <property type="term" value="C:nucleus"/>
    <property type="evidence" value="ECO:0007669"/>
    <property type="project" value="UniProtKB-SubCell"/>
</dbReference>
<dbReference type="GO" id="GO:0003677">
    <property type="term" value="F:DNA binding"/>
    <property type="evidence" value="ECO:0007669"/>
    <property type="project" value="UniProtKB-KW"/>
</dbReference>
<dbReference type="GO" id="GO:0003700">
    <property type="term" value="F:DNA-binding transcription factor activity"/>
    <property type="evidence" value="ECO:0000250"/>
    <property type="project" value="TAIR"/>
</dbReference>
<dbReference type="GO" id="GO:0000981">
    <property type="term" value="F:DNA-binding transcription factor activity, RNA polymerase II-specific"/>
    <property type="evidence" value="ECO:0007669"/>
    <property type="project" value="InterPro"/>
</dbReference>
<dbReference type="CDD" id="cd00086">
    <property type="entry name" value="homeodomain"/>
    <property type="match status" value="1"/>
</dbReference>
<dbReference type="FunFam" id="1.10.10.60:FF:000241">
    <property type="entry name" value="homeobox-leucine zipper protein ATHB-40"/>
    <property type="match status" value="1"/>
</dbReference>
<dbReference type="Gene3D" id="1.10.10.60">
    <property type="entry name" value="Homeodomain-like"/>
    <property type="match status" value="1"/>
</dbReference>
<dbReference type="InterPro" id="IPR001356">
    <property type="entry name" value="HD"/>
</dbReference>
<dbReference type="InterPro" id="IPR045224">
    <property type="entry name" value="HDZip_class_I_plant"/>
</dbReference>
<dbReference type="InterPro" id="IPR017970">
    <property type="entry name" value="Homeobox_CS"/>
</dbReference>
<dbReference type="InterPro" id="IPR009057">
    <property type="entry name" value="Homeodomain-like_sf"/>
</dbReference>
<dbReference type="InterPro" id="IPR000047">
    <property type="entry name" value="HTH_motif"/>
</dbReference>
<dbReference type="PANTHER" id="PTHR24326">
    <property type="entry name" value="HOMEOBOX-LEUCINE ZIPPER PROTEIN"/>
    <property type="match status" value="1"/>
</dbReference>
<dbReference type="PANTHER" id="PTHR24326:SF537">
    <property type="entry name" value="HOMEOBOX-LEUCINE ZIPPER PROTEIN ATHB-21"/>
    <property type="match status" value="1"/>
</dbReference>
<dbReference type="Pfam" id="PF00046">
    <property type="entry name" value="Homeodomain"/>
    <property type="match status" value="1"/>
</dbReference>
<dbReference type="PRINTS" id="PR00031">
    <property type="entry name" value="HTHREPRESSR"/>
</dbReference>
<dbReference type="SMART" id="SM00389">
    <property type="entry name" value="HOX"/>
    <property type="match status" value="1"/>
</dbReference>
<dbReference type="SUPFAM" id="SSF46689">
    <property type="entry name" value="Homeodomain-like"/>
    <property type="match status" value="1"/>
</dbReference>
<dbReference type="PROSITE" id="PS00027">
    <property type="entry name" value="HOMEOBOX_1"/>
    <property type="match status" value="1"/>
</dbReference>
<dbReference type="PROSITE" id="PS50071">
    <property type="entry name" value="HOMEOBOX_2"/>
    <property type="match status" value="1"/>
</dbReference>
<gene>
    <name type="primary">ATHB-21</name>
    <name type="ordered locus">At2g18550</name>
    <name type="ORF">F24H14.10</name>
</gene>
<evidence type="ECO:0000250" key="1"/>
<evidence type="ECO:0000255" key="2">
    <source>
        <dbReference type="PROSITE-ProRule" id="PRU00108"/>
    </source>
</evidence>
<evidence type="ECO:0000256" key="3">
    <source>
        <dbReference type="SAM" id="MobiDB-lite"/>
    </source>
</evidence>
<evidence type="ECO:0000269" key="4">
    <source>
    </source>
</evidence>
<evidence type="ECO:0000305" key="5"/>
<keyword id="KW-0238">DNA-binding</keyword>
<keyword id="KW-0371">Homeobox</keyword>
<keyword id="KW-0539">Nucleus</keyword>
<keyword id="KW-1185">Reference proteome</keyword>
<keyword id="KW-0346">Stress response</keyword>
<keyword id="KW-0804">Transcription</keyword>
<keyword id="KW-0805">Transcription regulation</keyword>
<reference key="1">
    <citation type="journal article" date="1999" name="Nature">
        <title>Sequence and analysis of chromosome 2 of the plant Arabidopsis thaliana.</title>
        <authorList>
            <person name="Lin X."/>
            <person name="Kaul S."/>
            <person name="Rounsley S.D."/>
            <person name="Shea T.P."/>
            <person name="Benito M.-I."/>
            <person name="Town C.D."/>
            <person name="Fujii C.Y."/>
            <person name="Mason T.M."/>
            <person name="Bowman C.L."/>
            <person name="Barnstead M.E."/>
            <person name="Feldblyum T.V."/>
            <person name="Buell C.R."/>
            <person name="Ketchum K.A."/>
            <person name="Lee J.J."/>
            <person name="Ronning C.M."/>
            <person name="Koo H.L."/>
            <person name="Moffat K.S."/>
            <person name="Cronin L.A."/>
            <person name="Shen M."/>
            <person name="Pai G."/>
            <person name="Van Aken S."/>
            <person name="Umayam L."/>
            <person name="Tallon L.J."/>
            <person name="Gill J.E."/>
            <person name="Adams M.D."/>
            <person name="Carrera A.J."/>
            <person name="Creasy T.H."/>
            <person name="Goodman H.M."/>
            <person name="Somerville C.R."/>
            <person name="Copenhaver G.P."/>
            <person name="Preuss D."/>
            <person name="Nierman W.C."/>
            <person name="White O."/>
            <person name="Eisen J.A."/>
            <person name="Salzberg S.L."/>
            <person name="Fraser C.M."/>
            <person name="Venter J.C."/>
        </authorList>
    </citation>
    <scope>NUCLEOTIDE SEQUENCE [LARGE SCALE GENOMIC DNA]</scope>
    <source>
        <strain>cv. Columbia</strain>
    </source>
</reference>
<reference key="2">
    <citation type="journal article" date="2017" name="Plant J.">
        <title>Araport11: a complete reannotation of the Arabidopsis thaliana reference genome.</title>
        <authorList>
            <person name="Cheng C.Y."/>
            <person name="Krishnakumar V."/>
            <person name="Chan A.P."/>
            <person name="Thibaud-Nissen F."/>
            <person name="Schobel S."/>
            <person name="Town C.D."/>
        </authorList>
    </citation>
    <scope>GENOME REANNOTATION</scope>
    <source>
        <strain>cv. Columbia</strain>
    </source>
</reference>
<reference key="3">
    <citation type="submission" date="2008-04" db="EMBL/GenBank/DDBJ databases">
        <title>Arabidopsis ORF clones.</title>
        <authorList>
            <person name="De Los Reyes C."/>
            <person name="Quan R."/>
            <person name="Chen H."/>
            <person name="Bautista V.R."/>
            <person name="Kim C.J."/>
            <person name="Ecker J.R."/>
        </authorList>
    </citation>
    <scope>NUCLEOTIDE SEQUENCE [LARGE SCALE MRNA]</scope>
    <source>
        <strain>cv. Columbia</strain>
    </source>
</reference>
<reference key="4">
    <citation type="journal article" date="2005" name="Plant Physiol.">
        <title>Homeodomain leucine zipper class I genes in Arabidopsis. Expression patterns and phylogenetic relationships.</title>
        <authorList>
            <person name="Henriksson E."/>
            <person name="Olsson A.S.B."/>
            <person name="Johannesson H."/>
            <person name="Johansson H."/>
            <person name="Hanson J."/>
            <person name="Engstroem P."/>
            <person name="Soederman E."/>
        </authorList>
    </citation>
    <scope>GENE FAMILY</scope>
    <scope>TISSUE SPECIFICITY</scope>
    <scope>INDUCTION</scope>
</reference>
<name>ATB21_ARATH</name>